<gene>
    <name type="primary">hoxa13a</name>
</gene>
<dbReference type="EMBL" id="DQ481663">
    <property type="protein sequence ID" value="ABF22376.1"/>
    <property type="molecule type" value="Genomic_DNA"/>
</dbReference>
<dbReference type="SMR" id="Q1KL22"/>
<dbReference type="STRING" id="31033.ENSTRUP00000040931"/>
<dbReference type="Ensembl" id="ENSTRUT00000041073.3">
    <property type="protein sequence ID" value="ENSTRUP00000040931.1"/>
    <property type="gene ID" value="ENSTRUG00000016010.3"/>
</dbReference>
<dbReference type="GeneID" id="101069611"/>
<dbReference type="KEGG" id="tru:101069611"/>
<dbReference type="CTD" id="570239"/>
<dbReference type="eggNOG" id="KOG0487">
    <property type="taxonomic scope" value="Eukaryota"/>
</dbReference>
<dbReference type="GeneTree" id="ENSGT00940000164071"/>
<dbReference type="HOGENOM" id="CLU_059940_1_0_1"/>
<dbReference type="InParanoid" id="Q1KL22"/>
<dbReference type="OMA" id="CPKEQNQ"/>
<dbReference type="OrthoDB" id="6159439at2759"/>
<dbReference type="TreeFam" id="TF330813"/>
<dbReference type="Proteomes" id="UP000005226">
    <property type="component" value="Chromosome 12"/>
</dbReference>
<dbReference type="GO" id="GO:0005634">
    <property type="term" value="C:nucleus"/>
    <property type="evidence" value="ECO:0007669"/>
    <property type="project" value="UniProtKB-SubCell"/>
</dbReference>
<dbReference type="GO" id="GO:0003677">
    <property type="term" value="F:DNA binding"/>
    <property type="evidence" value="ECO:0007669"/>
    <property type="project" value="UniProtKB-KW"/>
</dbReference>
<dbReference type="GO" id="GO:0000981">
    <property type="term" value="F:DNA-binding transcription factor activity, RNA polymerase II-specific"/>
    <property type="evidence" value="ECO:0007669"/>
    <property type="project" value="Ensembl"/>
</dbReference>
<dbReference type="GO" id="GO:0033333">
    <property type="term" value="P:fin development"/>
    <property type="evidence" value="ECO:0007669"/>
    <property type="project" value="Ensembl"/>
</dbReference>
<dbReference type="GO" id="GO:0000122">
    <property type="term" value="P:negative regulation of transcription by RNA polymerase II"/>
    <property type="evidence" value="ECO:0007669"/>
    <property type="project" value="Ensembl"/>
</dbReference>
<dbReference type="CDD" id="cd00086">
    <property type="entry name" value="homeodomain"/>
    <property type="match status" value="1"/>
</dbReference>
<dbReference type="FunFam" id="1.10.10.60:FF:000084">
    <property type="entry name" value="Homeobox protein Hox-D13"/>
    <property type="match status" value="1"/>
</dbReference>
<dbReference type="Gene3D" id="1.10.10.60">
    <property type="entry name" value="Homeodomain-like"/>
    <property type="match status" value="1"/>
</dbReference>
<dbReference type="InterPro" id="IPR051003">
    <property type="entry name" value="AP_axis_regulatory_Homeobox"/>
</dbReference>
<dbReference type="InterPro" id="IPR001356">
    <property type="entry name" value="HD"/>
</dbReference>
<dbReference type="InterPro" id="IPR017970">
    <property type="entry name" value="Homeobox_CS"/>
</dbReference>
<dbReference type="InterPro" id="IPR009057">
    <property type="entry name" value="Homeodomain-like_sf"/>
</dbReference>
<dbReference type="InterPro" id="IPR022067">
    <property type="entry name" value="HoxA13_N"/>
</dbReference>
<dbReference type="PANTHER" id="PTHR45804:SF3">
    <property type="entry name" value="HOMEOBOX PROTEIN HOX-A13"/>
    <property type="match status" value="1"/>
</dbReference>
<dbReference type="PANTHER" id="PTHR45804">
    <property type="entry name" value="SEGMENTATION PROTEIN FUSHI TARAZU-LIKE PROTEIN"/>
    <property type="match status" value="1"/>
</dbReference>
<dbReference type="Pfam" id="PF00046">
    <property type="entry name" value="Homeodomain"/>
    <property type="match status" value="1"/>
</dbReference>
<dbReference type="Pfam" id="PF12284">
    <property type="entry name" value="HoxA13_N"/>
    <property type="match status" value="1"/>
</dbReference>
<dbReference type="SMART" id="SM00389">
    <property type="entry name" value="HOX"/>
    <property type="match status" value="1"/>
</dbReference>
<dbReference type="SUPFAM" id="SSF46689">
    <property type="entry name" value="Homeodomain-like"/>
    <property type="match status" value="1"/>
</dbReference>
<dbReference type="PROSITE" id="PS00027">
    <property type="entry name" value="HOMEOBOX_1"/>
    <property type="match status" value="1"/>
</dbReference>
<dbReference type="PROSITE" id="PS50071">
    <property type="entry name" value="HOMEOBOX_2"/>
    <property type="match status" value="1"/>
</dbReference>
<accession>Q1KL22</accession>
<organism>
    <name type="scientific">Takifugu rubripes</name>
    <name type="common">Japanese pufferfish</name>
    <name type="synonym">Fugu rubripes</name>
    <dbReference type="NCBI Taxonomy" id="31033"/>
    <lineage>
        <taxon>Eukaryota</taxon>
        <taxon>Metazoa</taxon>
        <taxon>Chordata</taxon>
        <taxon>Craniata</taxon>
        <taxon>Vertebrata</taxon>
        <taxon>Euteleostomi</taxon>
        <taxon>Actinopterygii</taxon>
        <taxon>Neopterygii</taxon>
        <taxon>Teleostei</taxon>
        <taxon>Neoteleostei</taxon>
        <taxon>Acanthomorphata</taxon>
        <taxon>Eupercaria</taxon>
        <taxon>Tetraodontiformes</taxon>
        <taxon>Tetradontoidea</taxon>
        <taxon>Tetraodontidae</taxon>
        <taxon>Takifugu</taxon>
    </lineage>
</organism>
<sequence>MTTSLLLRPRWVDPSVMFLYDNGGGSDEVSKNMEGFAGGNFAANQCRNLMGHPASLAPSTAYSSCDVPTSAIGEPVKQCSPCSAAQNSSSASLPYGYFGSGYYPCRMSHHSSIKSCSAQPPSAYGEKYMDTSATSDDFTSRAKEFAFYPTYPSGPYQPVPSYLDVPVVPTISAPSEARHESLLSMESYQPWTLAPNGWNSQVYCAKEQPQAGHMWKSSVSDATSHTGGDSGSYRRGRKKRVPYTKVQLKELEREYAANKFITKDKRRRISAQTNLSERQVTIWFQNRRVKEKKVVNKLKTIS</sequence>
<proteinExistence type="inferred from homology"/>
<evidence type="ECO:0000250" key="1"/>
<evidence type="ECO:0000255" key="2">
    <source>
        <dbReference type="PROSITE-ProRule" id="PRU00108"/>
    </source>
</evidence>
<evidence type="ECO:0000256" key="3">
    <source>
        <dbReference type="SAM" id="MobiDB-lite"/>
    </source>
</evidence>
<evidence type="ECO:0000305" key="4"/>
<protein>
    <recommendedName>
        <fullName>Homeobox protein Hox-A13a</fullName>
    </recommendedName>
</protein>
<keyword id="KW-0217">Developmental protein</keyword>
<keyword id="KW-0238">DNA-binding</keyword>
<keyword id="KW-0371">Homeobox</keyword>
<keyword id="KW-0539">Nucleus</keyword>
<keyword id="KW-1185">Reference proteome</keyword>
<keyword id="KW-0804">Transcription</keyword>
<keyword id="KW-0805">Transcription regulation</keyword>
<comment type="function">
    <text evidence="1">Sequence-specific transcription factor which is part of a developmental regulatory system that provides cells with specific positional identities on the anterior-posterior axis.</text>
</comment>
<comment type="subcellular location">
    <subcellularLocation>
        <location evidence="2">Nucleus</location>
    </subcellularLocation>
</comment>
<comment type="similarity">
    <text evidence="4">Belongs to the Abd-B homeobox family.</text>
</comment>
<reference key="1">
    <citation type="journal article" date="2006" name="Proc. Natl. Acad. Sci. U.S.A.">
        <title>Highly conserved syntenic blocks at the vertebrate Hox loci and conserved regulatory elements within and outside Hox gene clusters.</title>
        <authorList>
            <person name="Lee A.P."/>
            <person name="Koh E.G.L."/>
            <person name="Tay A."/>
            <person name="Brenner S."/>
            <person name="Venkatesh B."/>
        </authorList>
    </citation>
    <scope>NUCLEOTIDE SEQUENCE [GENOMIC DNA]</scope>
</reference>
<feature type="chain" id="PRO_0000265973" description="Homeobox protein Hox-A13a">
    <location>
        <begin position="1"/>
        <end position="302"/>
    </location>
</feature>
<feature type="DNA-binding region" description="Homeobox" evidence="2">
    <location>
        <begin position="236"/>
        <end position="295"/>
    </location>
</feature>
<feature type="region of interest" description="Disordered" evidence="3">
    <location>
        <begin position="214"/>
        <end position="239"/>
    </location>
</feature>
<feature type="compositionally biased region" description="Polar residues" evidence="3">
    <location>
        <begin position="217"/>
        <end position="227"/>
    </location>
</feature>
<name>HXADA_TAKRU</name>